<protein>
    <recommendedName>
        <fullName evidence="1">5'-methylthioadenosine/S-adenosylhomocysteine nucleosidase</fullName>
        <shortName evidence="1">MTA/SAH nucleosidase</shortName>
        <shortName evidence="1">MTAN</shortName>
        <ecNumber evidence="1">3.2.2.9</ecNumber>
    </recommendedName>
    <alternativeName>
        <fullName evidence="1">5'-deoxyadenosine nucleosidase</fullName>
        <shortName evidence="1">DOA nucleosidase</shortName>
        <shortName evidence="1">dAdo nucleosidase</shortName>
    </alternativeName>
    <alternativeName>
        <fullName evidence="1">5'-methylthioadenosine nucleosidase</fullName>
        <shortName evidence="1">MTA nucleosidase</shortName>
    </alternativeName>
    <alternativeName>
        <fullName evidence="1">S-adenosylhomocysteine nucleosidase</fullName>
        <shortName evidence="1">AdoHcy nucleosidase</shortName>
        <shortName evidence="1">SAH nucleosidase</shortName>
        <shortName evidence="1">SRH nucleosidase</shortName>
    </alternativeName>
</protein>
<feature type="chain" id="PRO_0000359332" description="5'-methylthioadenosine/S-adenosylhomocysteine nucleosidase">
    <location>
        <begin position="1"/>
        <end position="232"/>
    </location>
</feature>
<feature type="active site" description="Proton acceptor" evidence="1">
    <location>
        <position position="12"/>
    </location>
</feature>
<feature type="active site" description="Proton donor" evidence="1">
    <location>
        <position position="197"/>
    </location>
</feature>
<feature type="binding site" evidence="1">
    <location>
        <position position="78"/>
    </location>
    <ligand>
        <name>substrate</name>
    </ligand>
</feature>
<feature type="binding site" evidence="1">
    <location>
        <position position="152"/>
    </location>
    <ligand>
        <name>substrate</name>
    </ligand>
</feature>
<feature type="binding site" evidence="1">
    <location>
        <begin position="173"/>
        <end position="174"/>
    </location>
    <ligand>
        <name>substrate</name>
    </ligand>
</feature>
<evidence type="ECO:0000255" key="1">
    <source>
        <dbReference type="HAMAP-Rule" id="MF_01684"/>
    </source>
</evidence>
<name>MTNN_SALHS</name>
<gene>
    <name evidence="1" type="primary">mtnN</name>
    <name type="ordered locus">SeHA_C0244</name>
</gene>
<keyword id="KW-0028">Amino-acid biosynthesis</keyword>
<keyword id="KW-0378">Hydrolase</keyword>
<keyword id="KW-0486">Methionine biosynthesis</keyword>
<reference key="1">
    <citation type="journal article" date="2011" name="J. Bacteriol.">
        <title>Comparative genomics of 28 Salmonella enterica isolates: evidence for CRISPR-mediated adaptive sublineage evolution.</title>
        <authorList>
            <person name="Fricke W.F."/>
            <person name="Mammel M.K."/>
            <person name="McDermott P.F."/>
            <person name="Tartera C."/>
            <person name="White D.G."/>
            <person name="Leclerc J.E."/>
            <person name="Ravel J."/>
            <person name="Cebula T.A."/>
        </authorList>
    </citation>
    <scope>NUCLEOTIDE SEQUENCE [LARGE SCALE GENOMIC DNA]</scope>
    <source>
        <strain>SL476</strain>
    </source>
</reference>
<sequence>MKIGIIGAMEEEVTLLRDKIDNRQTITLGGCEIYTGQLNGTEVALLKSGIGKVAAALGATLLLEHCKPDVIINTGSAGGLASTLKVGDIVVSDEARYHDADVTAFGYEYGQLPGCPAGFKADDKLIAAAESCIRELNLNAVRGLIVSGDAFINGSVGLAKIRHNFPDAVAVEMEATAIAHVCYNFSVPFVVVRAISDVADQQSHLSFDEFLAVAAKQSTLMVETLVQKLAHG</sequence>
<accession>B4TK35</accession>
<comment type="function">
    <text evidence="1">Catalyzes the irreversible cleavage of the glycosidic bond in both 5'-methylthioadenosine (MTA) and S-adenosylhomocysteine (SAH/AdoHcy) to adenine and the corresponding thioribose, 5'-methylthioribose and S-ribosylhomocysteine, respectively. Also cleaves 5'-deoxyadenosine, a toxic by-product of radical S-adenosylmethionine (SAM) enzymes, into 5-deoxyribose and adenine. Thus, is required for in vivo function of the radical SAM enzymes biotin synthase and lipoic acid synthase, that are inhibited by 5'-deoxyadenosine accumulation.</text>
</comment>
<comment type="catalytic activity">
    <reaction evidence="1">
        <text>S-adenosyl-L-homocysteine + H2O = S-(5-deoxy-D-ribos-5-yl)-L-homocysteine + adenine</text>
        <dbReference type="Rhea" id="RHEA:17805"/>
        <dbReference type="ChEBI" id="CHEBI:15377"/>
        <dbReference type="ChEBI" id="CHEBI:16708"/>
        <dbReference type="ChEBI" id="CHEBI:57856"/>
        <dbReference type="ChEBI" id="CHEBI:58195"/>
        <dbReference type="EC" id="3.2.2.9"/>
    </reaction>
</comment>
<comment type="catalytic activity">
    <reaction evidence="1">
        <text>S-methyl-5'-thioadenosine + H2O = 5-(methylsulfanyl)-D-ribose + adenine</text>
        <dbReference type="Rhea" id="RHEA:13617"/>
        <dbReference type="ChEBI" id="CHEBI:15377"/>
        <dbReference type="ChEBI" id="CHEBI:16708"/>
        <dbReference type="ChEBI" id="CHEBI:17509"/>
        <dbReference type="ChEBI" id="CHEBI:78440"/>
        <dbReference type="EC" id="3.2.2.9"/>
    </reaction>
</comment>
<comment type="catalytic activity">
    <reaction evidence="1">
        <text>5'-deoxyadenosine + H2O = 5-deoxy-D-ribose + adenine</text>
        <dbReference type="Rhea" id="RHEA:29859"/>
        <dbReference type="ChEBI" id="CHEBI:15377"/>
        <dbReference type="ChEBI" id="CHEBI:16708"/>
        <dbReference type="ChEBI" id="CHEBI:17319"/>
        <dbReference type="ChEBI" id="CHEBI:149540"/>
        <dbReference type="EC" id="3.2.2.9"/>
    </reaction>
    <physiologicalReaction direction="left-to-right" evidence="1">
        <dbReference type="Rhea" id="RHEA:29860"/>
    </physiologicalReaction>
</comment>
<comment type="pathway">
    <text evidence="1">Amino-acid biosynthesis; L-methionine biosynthesis via salvage pathway; S-methyl-5-thio-alpha-D-ribose 1-phosphate from S-methyl-5'-thioadenosine (hydrolase route): step 1/2.</text>
</comment>
<comment type="subunit">
    <text evidence="1">Homodimer.</text>
</comment>
<comment type="similarity">
    <text evidence="1">Belongs to the PNP/UDP phosphorylase family. MtnN subfamily.</text>
</comment>
<organism>
    <name type="scientific">Salmonella heidelberg (strain SL476)</name>
    <dbReference type="NCBI Taxonomy" id="454169"/>
    <lineage>
        <taxon>Bacteria</taxon>
        <taxon>Pseudomonadati</taxon>
        <taxon>Pseudomonadota</taxon>
        <taxon>Gammaproteobacteria</taxon>
        <taxon>Enterobacterales</taxon>
        <taxon>Enterobacteriaceae</taxon>
        <taxon>Salmonella</taxon>
    </lineage>
</organism>
<proteinExistence type="inferred from homology"/>
<dbReference type="EC" id="3.2.2.9" evidence="1"/>
<dbReference type="EMBL" id="CP001120">
    <property type="protein sequence ID" value="ACF70478.1"/>
    <property type="molecule type" value="Genomic_DNA"/>
</dbReference>
<dbReference type="RefSeq" id="WP_000689824.1">
    <property type="nucleotide sequence ID" value="NC_011083.1"/>
</dbReference>
<dbReference type="SMR" id="B4TK35"/>
<dbReference type="KEGG" id="seh:SeHA_C0244"/>
<dbReference type="HOGENOM" id="CLU_031248_2_2_6"/>
<dbReference type="UniPathway" id="UPA00904">
    <property type="reaction ID" value="UER00871"/>
</dbReference>
<dbReference type="Proteomes" id="UP000001866">
    <property type="component" value="Chromosome"/>
</dbReference>
<dbReference type="GO" id="GO:0005829">
    <property type="term" value="C:cytosol"/>
    <property type="evidence" value="ECO:0007669"/>
    <property type="project" value="TreeGrafter"/>
</dbReference>
<dbReference type="GO" id="GO:0008782">
    <property type="term" value="F:adenosylhomocysteine nucleosidase activity"/>
    <property type="evidence" value="ECO:0007669"/>
    <property type="project" value="UniProtKB-UniRule"/>
</dbReference>
<dbReference type="GO" id="GO:0008930">
    <property type="term" value="F:methylthioadenosine nucleosidase activity"/>
    <property type="evidence" value="ECO:0007669"/>
    <property type="project" value="UniProtKB-UniRule"/>
</dbReference>
<dbReference type="GO" id="GO:0019509">
    <property type="term" value="P:L-methionine salvage from methylthioadenosine"/>
    <property type="evidence" value="ECO:0007669"/>
    <property type="project" value="UniProtKB-UniRule"/>
</dbReference>
<dbReference type="GO" id="GO:0019284">
    <property type="term" value="P:L-methionine salvage from S-adenosylmethionine"/>
    <property type="evidence" value="ECO:0007669"/>
    <property type="project" value="TreeGrafter"/>
</dbReference>
<dbReference type="GO" id="GO:0046124">
    <property type="term" value="P:purine deoxyribonucleoside catabolic process"/>
    <property type="evidence" value="ECO:0007669"/>
    <property type="project" value="UniProtKB-UniRule"/>
</dbReference>
<dbReference type="CDD" id="cd09008">
    <property type="entry name" value="MTAN"/>
    <property type="match status" value="1"/>
</dbReference>
<dbReference type="FunFam" id="3.40.50.1580:FF:000001">
    <property type="entry name" value="MTA/SAH nucleosidase family protein"/>
    <property type="match status" value="1"/>
</dbReference>
<dbReference type="Gene3D" id="3.40.50.1580">
    <property type="entry name" value="Nucleoside phosphorylase domain"/>
    <property type="match status" value="1"/>
</dbReference>
<dbReference type="HAMAP" id="MF_01684">
    <property type="entry name" value="Salvage_MtnN"/>
    <property type="match status" value="1"/>
</dbReference>
<dbReference type="InterPro" id="IPR010049">
    <property type="entry name" value="MTA_SAH_Nsdase"/>
</dbReference>
<dbReference type="InterPro" id="IPR000845">
    <property type="entry name" value="Nucleoside_phosphorylase_d"/>
</dbReference>
<dbReference type="InterPro" id="IPR035994">
    <property type="entry name" value="Nucleoside_phosphorylase_sf"/>
</dbReference>
<dbReference type="NCBIfam" id="TIGR01704">
    <property type="entry name" value="MTA_SAH-Nsdase"/>
    <property type="match status" value="1"/>
</dbReference>
<dbReference type="NCBIfam" id="NF004079">
    <property type="entry name" value="PRK05584.1"/>
    <property type="match status" value="1"/>
</dbReference>
<dbReference type="PANTHER" id="PTHR46832">
    <property type="entry name" value="5'-METHYLTHIOADENOSINE/S-ADENOSYLHOMOCYSTEINE NUCLEOSIDASE"/>
    <property type="match status" value="1"/>
</dbReference>
<dbReference type="PANTHER" id="PTHR46832:SF1">
    <property type="entry name" value="5'-METHYLTHIOADENOSINE_S-ADENOSYLHOMOCYSTEINE NUCLEOSIDASE"/>
    <property type="match status" value="1"/>
</dbReference>
<dbReference type="Pfam" id="PF01048">
    <property type="entry name" value="PNP_UDP_1"/>
    <property type="match status" value="1"/>
</dbReference>
<dbReference type="SUPFAM" id="SSF53167">
    <property type="entry name" value="Purine and uridine phosphorylases"/>
    <property type="match status" value="1"/>
</dbReference>